<keyword id="KW-0328">Glycosyltransferase</keyword>
<keyword id="KW-0479">Metal-binding</keyword>
<keyword id="KW-0671">Queuosine biosynthesis</keyword>
<keyword id="KW-1185">Reference proteome</keyword>
<keyword id="KW-0808">Transferase</keyword>
<keyword id="KW-0819">tRNA processing</keyword>
<keyword id="KW-0862">Zinc</keyword>
<dbReference type="EC" id="2.4.2.29" evidence="1"/>
<dbReference type="EMBL" id="AE017340">
    <property type="protein sequence ID" value="AAV83037.1"/>
    <property type="molecule type" value="Genomic_DNA"/>
</dbReference>
<dbReference type="SMR" id="Q5QVL2"/>
<dbReference type="STRING" id="283942.IL2205"/>
<dbReference type="KEGG" id="ilo:IL2205"/>
<dbReference type="eggNOG" id="COG0343">
    <property type="taxonomic scope" value="Bacteria"/>
</dbReference>
<dbReference type="HOGENOM" id="CLU_022060_0_1_6"/>
<dbReference type="UniPathway" id="UPA00392"/>
<dbReference type="Proteomes" id="UP000001171">
    <property type="component" value="Chromosome"/>
</dbReference>
<dbReference type="GO" id="GO:0005829">
    <property type="term" value="C:cytosol"/>
    <property type="evidence" value="ECO:0007669"/>
    <property type="project" value="TreeGrafter"/>
</dbReference>
<dbReference type="GO" id="GO:0046872">
    <property type="term" value="F:metal ion binding"/>
    <property type="evidence" value="ECO:0007669"/>
    <property type="project" value="UniProtKB-KW"/>
</dbReference>
<dbReference type="GO" id="GO:0008479">
    <property type="term" value="F:tRNA-guanosine(34) queuine transglycosylase activity"/>
    <property type="evidence" value="ECO:0007669"/>
    <property type="project" value="UniProtKB-UniRule"/>
</dbReference>
<dbReference type="GO" id="GO:0008616">
    <property type="term" value="P:queuosine biosynthetic process"/>
    <property type="evidence" value="ECO:0007669"/>
    <property type="project" value="UniProtKB-UniRule"/>
</dbReference>
<dbReference type="GO" id="GO:0002099">
    <property type="term" value="P:tRNA wobble guanine modification"/>
    <property type="evidence" value="ECO:0007669"/>
    <property type="project" value="TreeGrafter"/>
</dbReference>
<dbReference type="GO" id="GO:0101030">
    <property type="term" value="P:tRNA-guanine transglycosylation"/>
    <property type="evidence" value="ECO:0007669"/>
    <property type="project" value="InterPro"/>
</dbReference>
<dbReference type="FunFam" id="3.20.20.105:FF:000001">
    <property type="entry name" value="Queuine tRNA-ribosyltransferase"/>
    <property type="match status" value="1"/>
</dbReference>
<dbReference type="Gene3D" id="3.20.20.105">
    <property type="entry name" value="Queuine tRNA-ribosyltransferase-like"/>
    <property type="match status" value="1"/>
</dbReference>
<dbReference type="HAMAP" id="MF_00168">
    <property type="entry name" value="Q_tRNA_Tgt"/>
    <property type="match status" value="1"/>
</dbReference>
<dbReference type="InterPro" id="IPR050076">
    <property type="entry name" value="ArchSynthase1/Queuine_TRR"/>
</dbReference>
<dbReference type="InterPro" id="IPR004803">
    <property type="entry name" value="TGT"/>
</dbReference>
<dbReference type="InterPro" id="IPR036511">
    <property type="entry name" value="TGT-like_sf"/>
</dbReference>
<dbReference type="InterPro" id="IPR002616">
    <property type="entry name" value="tRNA_ribo_trans-like"/>
</dbReference>
<dbReference type="NCBIfam" id="TIGR00430">
    <property type="entry name" value="Q_tRNA_tgt"/>
    <property type="match status" value="1"/>
</dbReference>
<dbReference type="NCBIfam" id="TIGR00449">
    <property type="entry name" value="tgt_general"/>
    <property type="match status" value="1"/>
</dbReference>
<dbReference type="PANTHER" id="PTHR46499">
    <property type="entry name" value="QUEUINE TRNA-RIBOSYLTRANSFERASE"/>
    <property type="match status" value="1"/>
</dbReference>
<dbReference type="PANTHER" id="PTHR46499:SF1">
    <property type="entry name" value="QUEUINE TRNA-RIBOSYLTRANSFERASE"/>
    <property type="match status" value="1"/>
</dbReference>
<dbReference type="Pfam" id="PF01702">
    <property type="entry name" value="TGT"/>
    <property type="match status" value="1"/>
</dbReference>
<dbReference type="SUPFAM" id="SSF51713">
    <property type="entry name" value="tRNA-guanine transglycosylase"/>
    <property type="match status" value="1"/>
</dbReference>
<sequence length="373" mass="42162">MTMKFELDKTSGRARRGRMVFERGTVETPAFMPVGTLGTVKGMTPEEVKDTGAQICLGNTFHLMLRPGTQIIQQHGDLHDFMNWDKPILTDSGGFQVFSLGELRKITEEGVTFRSPINGEKILLTPEKSMQVQRELGSDIVMIFDECTPFPATQAEARSSMELSLRWAERSKQEHGESKAALFGIIQGGMYEELRDISLKGLTDIGFDGYAIGGLSVGEPKEDMMRILEHTAPQMPEQKPRYLMGVGKPEDLVEAVRRGIDMFDCVMPTRNARNGHLFISTGVVKIRNAVHRTDTSPLDENCDCYTCKNYSRAYLHHLDRTNEMLGSRLNTIHNLRFYQKVMSDMRDALDAGTFDDYVKEFYRLRDQSVPALD</sequence>
<evidence type="ECO:0000255" key="1">
    <source>
        <dbReference type="HAMAP-Rule" id="MF_00168"/>
    </source>
</evidence>
<comment type="function">
    <text evidence="1">Catalyzes the base-exchange of a guanine (G) residue with the queuine precursor 7-aminomethyl-7-deazaguanine (PreQ1) at position 34 (anticodon wobble position) in tRNAs with GU(N) anticodons (tRNA-Asp, -Asn, -His and -Tyr). Catalysis occurs through a double-displacement mechanism. The nucleophile active site attacks the C1' of nucleotide 34 to detach the guanine base from the RNA, forming a covalent enzyme-RNA intermediate. The proton acceptor active site deprotonates the incoming PreQ1, allowing a nucleophilic attack on the C1' of the ribose to form the product. After dissociation, two additional enzymatic reactions on the tRNA convert PreQ1 to queuine (Q), resulting in the hypermodified nucleoside queuosine (7-(((4,5-cis-dihydroxy-2-cyclopenten-1-yl)amino)methyl)-7-deazaguanosine).</text>
</comment>
<comment type="catalytic activity">
    <reaction evidence="1">
        <text>7-aminomethyl-7-carbaguanine + guanosine(34) in tRNA = 7-aminomethyl-7-carbaguanosine(34) in tRNA + guanine</text>
        <dbReference type="Rhea" id="RHEA:24104"/>
        <dbReference type="Rhea" id="RHEA-COMP:10341"/>
        <dbReference type="Rhea" id="RHEA-COMP:10342"/>
        <dbReference type="ChEBI" id="CHEBI:16235"/>
        <dbReference type="ChEBI" id="CHEBI:58703"/>
        <dbReference type="ChEBI" id="CHEBI:74269"/>
        <dbReference type="ChEBI" id="CHEBI:82833"/>
        <dbReference type="EC" id="2.4.2.29"/>
    </reaction>
</comment>
<comment type="cofactor">
    <cofactor evidence="1">
        <name>Zn(2+)</name>
        <dbReference type="ChEBI" id="CHEBI:29105"/>
    </cofactor>
    <text evidence="1">Binds 1 zinc ion per subunit.</text>
</comment>
<comment type="pathway">
    <text evidence="1">tRNA modification; tRNA-queuosine biosynthesis.</text>
</comment>
<comment type="subunit">
    <text evidence="1">Homodimer. Within each dimer, one monomer is responsible for RNA recognition and catalysis, while the other monomer binds to the replacement base PreQ1.</text>
</comment>
<comment type="similarity">
    <text evidence="1">Belongs to the queuine tRNA-ribosyltransferase family.</text>
</comment>
<reference key="1">
    <citation type="journal article" date="2004" name="Proc. Natl. Acad. Sci. U.S.A.">
        <title>Genome sequence of the deep-sea gamma-proteobacterium Idiomarina loihiensis reveals amino acid fermentation as a source of carbon and energy.</title>
        <authorList>
            <person name="Hou S."/>
            <person name="Saw J.H."/>
            <person name="Lee K.S."/>
            <person name="Freitas T.A."/>
            <person name="Belisle C."/>
            <person name="Kawarabayasi Y."/>
            <person name="Donachie S.P."/>
            <person name="Pikina A."/>
            <person name="Galperin M.Y."/>
            <person name="Koonin E.V."/>
            <person name="Makarova K.S."/>
            <person name="Omelchenko M.V."/>
            <person name="Sorokin A."/>
            <person name="Wolf Y.I."/>
            <person name="Li Q.X."/>
            <person name="Keum Y.S."/>
            <person name="Campbell S."/>
            <person name="Denery J."/>
            <person name="Aizawa S."/>
            <person name="Shibata S."/>
            <person name="Malahoff A."/>
            <person name="Alam M."/>
        </authorList>
    </citation>
    <scope>NUCLEOTIDE SEQUENCE [LARGE SCALE GENOMIC DNA]</scope>
    <source>
        <strain>ATCC BAA-735 / DSM 15497 / L2-TR</strain>
    </source>
</reference>
<name>TGT_IDILO</name>
<gene>
    <name evidence="1" type="primary">tgt</name>
    <name type="ordered locus">IL2205</name>
</gene>
<proteinExistence type="inferred from homology"/>
<accession>Q5QVL2</accession>
<protein>
    <recommendedName>
        <fullName evidence="1">Queuine tRNA-ribosyltransferase</fullName>
        <ecNumber evidence="1">2.4.2.29</ecNumber>
    </recommendedName>
    <alternativeName>
        <fullName evidence="1">Guanine insertion enzyme</fullName>
    </alternativeName>
    <alternativeName>
        <fullName evidence="1">tRNA-guanine transglycosylase</fullName>
    </alternativeName>
</protein>
<feature type="chain" id="PRO_0000135485" description="Queuine tRNA-ribosyltransferase">
    <location>
        <begin position="1"/>
        <end position="373"/>
    </location>
</feature>
<feature type="region of interest" description="RNA binding" evidence="1">
    <location>
        <begin position="245"/>
        <end position="251"/>
    </location>
</feature>
<feature type="region of interest" description="RNA binding; important for wobble base 34 recognition" evidence="1">
    <location>
        <begin position="269"/>
        <end position="273"/>
    </location>
</feature>
<feature type="active site" description="Proton acceptor" evidence="1">
    <location>
        <position position="91"/>
    </location>
</feature>
<feature type="active site" description="Nucleophile" evidence="1">
    <location>
        <position position="264"/>
    </location>
</feature>
<feature type="binding site" evidence="1">
    <location>
        <begin position="91"/>
        <end position="95"/>
    </location>
    <ligand>
        <name>substrate</name>
    </ligand>
</feature>
<feature type="binding site" evidence="1">
    <location>
        <position position="145"/>
    </location>
    <ligand>
        <name>substrate</name>
    </ligand>
</feature>
<feature type="binding site" evidence="1">
    <location>
        <position position="187"/>
    </location>
    <ligand>
        <name>substrate</name>
    </ligand>
</feature>
<feature type="binding site" evidence="1">
    <location>
        <position position="214"/>
    </location>
    <ligand>
        <name>substrate</name>
    </ligand>
</feature>
<feature type="binding site" evidence="1">
    <location>
        <position position="302"/>
    </location>
    <ligand>
        <name>Zn(2+)</name>
        <dbReference type="ChEBI" id="CHEBI:29105"/>
    </ligand>
</feature>
<feature type="binding site" evidence="1">
    <location>
        <position position="304"/>
    </location>
    <ligand>
        <name>Zn(2+)</name>
        <dbReference type="ChEBI" id="CHEBI:29105"/>
    </ligand>
</feature>
<feature type="binding site" evidence="1">
    <location>
        <position position="307"/>
    </location>
    <ligand>
        <name>Zn(2+)</name>
        <dbReference type="ChEBI" id="CHEBI:29105"/>
    </ligand>
</feature>
<feature type="binding site" evidence="1">
    <location>
        <position position="333"/>
    </location>
    <ligand>
        <name>Zn(2+)</name>
        <dbReference type="ChEBI" id="CHEBI:29105"/>
    </ligand>
</feature>
<organism>
    <name type="scientific">Idiomarina loihiensis (strain ATCC BAA-735 / DSM 15497 / L2-TR)</name>
    <dbReference type="NCBI Taxonomy" id="283942"/>
    <lineage>
        <taxon>Bacteria</taxon>
        <taxon>Pseudomonadati</taxon>
        <taxon>Pseudomonadota</taxon>
        <taxon>Gammaproteobacteria</taxon>
        <taxon>Alteromonadales</taxon>
        <taxon>Idiomarinaceae</taxon>
        <taxon>Idiomarina</taxon>
    </lineage>
</organism>